<comment type="similarity">
    <text evidence="2">Belongs to the lymphocryptovirus BNLF2B family.</text>
</comment>
<organism>
    <name type="scientific">Epstein-Barr virus (strain AG876)</name>
    <name type="common">HHV-4</name>
    <name type="synonym">Human herpesvirus 4</name>
    <dbReference type="NCBI Taxonomy" id="82830"/>
    <lineage>
        <taxon>Viruses</taxon>
        <taxon>Duplodnaviria</taxon>
        <taxon>Heunggongvirae</taxon>
        <taxon>Peploviricota</taxon>
        <taxon>Herviviricetes</taxon>
        <taxon>Herpesvirales</taxon>
        <taxon>Orthoherpesviridae</taxon>
        <taxon>Gammaherpesvirinae</taxon>
        <taxon>Lymphocryptovirus</taxon>
        <taxon>Lymphocryptovirus humangamma4</taxon>
        <taxon>Epstein-Barr virus (strain GD1)</taxon>
    </lineage>
</organism>
<keyword id="KW-1185">Reference proteome</keyword>
<protein>
    <recommendedName>
        <fullName>Uncharacterized protein BNLF2b</fullName>
    </recommendedName>
</protein>
<organismHost>
    <name type="scientific">Homo sapiens</name>
    <name type="common">Human</name>
    <dbReference type="NCBI Taxonomy" id="9606"/>
</organismHost>
<reference key="1">
    <citation type="journal article" date="2006" name="Virology">
        <title>The genome of Epstein-Barr virus type 2 strain AG876.</title>
        <authorList>
            <person name="Dolan A."/>
            <person name="Addison C."/>
            <person name="Gatherer D."/>
            <person name="Davison A.J."/>
            <person name="McGeoch D.J."/>
        </authorList>
    </citation>
    <scope>NUCLEOTIDE SEQUENCE [LARGE SCALE GENOMIC DNA]</scope>
</reference>
<evidence type="ECO:0000256" key="1">
    <source>
        <dbReference type="SAM" id="MobiDB-lite"/>
    </source>
</evidence>
<evidence type="ECO:0000305" key="2"/>
<accession>Q1HVB5</accession>
<dbReference type="EMBL" id="DQ279927">
    <property type="protein sequence ID" value="ABB89292.1"/>
    <property type="molecule type" value="Genomic_DNA"/>
</dbReference>
<dbReference type="RefSeq" id="YP_001129513.1">
    <property type="nucleotide sequence ID" value="NC_009334.1"/>
</dbReference>
<dbReference type="SMR" id="Q1HVB5"/>
<dbReference type="IntAct" id="Q1HVB5">
    <property type="interactions" value="1"/>
</dbReference>
<dbReference type="MINT" id="Q1HVB5"/>
<dbReference type="KEGG" id="vg:5176220"/>
<dbReference type="Proteomes" id="UP000007639">
    <property type="component" value="Genome"/>
</dbReference>
<sequence length="98" mass="11104">MRPGRPLAGFYATLRRSFRRMSKRSKNKAKKERVPVEDRPPTPMPTSQRLIRRNALGGGVRPDAEDCIQRCHPLEPALGVSTKNFDLLSLRCELGWCG</sequence>
<feature type="chain" id="PRO_0000382431" description="Uncharacterized protein BNLF2b">
    <location>
        <begin position="1"/>
        <end position="98"/>
    </location>
</feature>
<feature type="region of interest" description="Disordered" evidence="1">
    <location>
        <begin position="19"/>
        <end position="47"/>
    </location>
</feature>
<feature type="compositionally biased region" description="Basic residues" evidence="1">
    <location>
        <begin position="19"/>
        <end position="31"/>
    </location>
</feature>
<name>BNL2B_EBVA8</name>
<gene>
    <name type="ORF">BNLF2b</name>
</gene>
<proteinExistence type="inferred from homology"/>